<dbReference type="EC" id="3.5.4.19" evidence="1"/>
<dbReference type="EMBL" id="CR522870">
    <property type="protein sequence ID" value="CAG37368.1"/>
    <property type="molecule type" value="Genomic_DNA"/>
</dbReference>
<dbReference type="RefSeq" id="WP_011189880.1">
    <property type="nucleotide sequence ID" value="NC_006138.1"/>
</dbReference>
<dbReference type="SMR" id="Q6AJV8"/>
<dbReference type="STRING" id="177439.DP2639"/>
<dbReference type="KEGG" id="dps:DP2639"/>
<dbReference type="eggNOG" id="COG0139">
    <property type="taxonomic scope" value="Bacteria"/>
</dbReference>
<dbReference type="HOGENOM" id="CLU_048577_5_0_7"/>
<dbReference type="OrthoDB" id="9795769at2"/>
<dbReference type="UniPathway" id="UPA00031">
    <property type="reaction ID" value="UER00008"/>
</dbReference>
<dbReference type="Proteomes" id="UP000000602">
    <property type="component" value="Chromosome"/>
</dbReference>
<dbReference type="GO" id="GO:0005737">
    <property type="term" value="C:cytoplasm"/>
    <property type="evidence" value="ECO:0007669"/>
    <property type="project" value="UniProtKB-SubCell"/>
</dbReference>
<dbReference type="GO" id="GO:0000287">
    <property type="term" value="F:magnesium ion binding"/>
    <property type="evidence" value="ECO:0007669"/>
    <property type="project" value="UniProtKB-UniRule"/>
</dbReference>
<dbReference type="GO" id="GO:0004635">
    <property type="term" value="F:phosphoribosyl-AMP cyclohydrolase activity"/>
    <property type="evidence" value="ECO:0007669"/>
    <property type="project" value="UniProtKB-UniRule"/>
</dbReference>
<dbReference type="GO" id="GO:0008270">
    <property type="term" value="F:zinc ion binding"/>
    <property type="evidence" value="ECO:0007669"/>
    <property type="project" value="UniProtKB-UniRule"/>
</dbReference>
<dbReference type="GO" id="GO:0000105">
    <property type="term" value="P:L-histidine biosynthetic process"/>
    <property type="evidence" value="ECO:0007669"/>
    <property type="project" value="UniProtKB-UniRule"/>
</dbReference>
<dbReference type="FunFam" id="3.10.20.810:FF:000001">
    <property type="entry name" value="Histidine biosynthesis bifunctional protein HisIE"/>
    <property type="match status" value="1"/>
</dbReference>
<dbReference type="Gene3D" id="3.10.20.810">
    <property type="entry name" value="Phosphoribosyl-AMP cyclohydrolase"/>
    <property type="match status" value="1"/>
</dbReference>
<dbReference type="HAMAP" id="MF_01021">
    <property type="entry name" value="HisI"/>
    <property type="match status" value="1"/>
</dbReference>
<dbReference type="InterPro" id="IPR026660">
    <property type="entry name" value="PRA-CH"/>
</dbReference>
<dbReference type="InterPro" id="IPR002496">
    <property type="entry name" value="PRib_AMP_CycHydrolase_dom"/>
</dbReference>
<dbReference type="InterPro" id="IPR038019">
    <property type="entry name" value="PRib_AMP_CycHydrolase_sf"/>
</dbReference>
<dbReference type="NCBIfam" id="NF000768">
    <property type="entry name" value="PRK00051.1"/>
    <property type="match status" value="1"/>
</dbReference>
<dbReference type="PANTHER" id="PTHR42945">
    <property type="entry name" value="HISTIDINE BIOSYNTHESIS BIFUNCTIONAL PROTEIN"/>
    <property type="match status" value="1"/>
</dbReference>
<dbReference type="PANTHER" id="PTHR42945:SF1">
    <property type="entry name" value="HISTIDINE BIOSYNTHESIS BIFUNCTIONAL PROTEIN HIS7"/>
    <property type="match status" value="1"/>
</dbReference>
<dbReference type="Pfam" id="PF01502">
    <property type="entry name" value="PRA-CH"/>
    <property type="match status" value="1"/>
</dbReference>
<dbReference type="SUPFAM" id="SSF141734">
    <property type="entry name" value="HisI-like"/>
    <property type="match status" value="1"/>
</dbReference>
<evidence type="ECO:0000255" key="1">
    <source>
        <dbReference type="HAMAP-Rule" id="MF_01021"/>
    </source>
</evidence>
<proteinExistence type="inferred from homology"/>
<accession>Q6AJV8</accession>
<keyword id="KW-0028">Amino-acid biosynthesis</keyword>
<keyword id="KW-0963">Cytoplasm</keyword>
<keyword id="KW-0368">Histidine biosynthesis</keyword>
<keyword id="KW-0378">Hydrolase</keyword>
<keyword id="KW-0460">Magnesium</keyword>
<keyword id="KW-0479">Metal-binding</keyword>
<keyword id="KW-1185">Reference proteome</keyword>
<keyword id="KW-0862">Zinc</keyword>
<comment type="function">
    <text evidence="1">Catalyzes the hydrolysis of the adenine ring of phosphoribosyl-AMP.</text>
</comment>
<comment type="catalytic activity">
    <reaction evidence="1">
        <text>1-(5-phospho-beta-D-ribosyl)-5'-AMP + H2O = 1-(5-phospho-beta-D-ribosyl)-5-[(5-phospho-beta-D-ribosylamino)methylideneamino]imidazole-4-carboxamide</text>
        <dbReference type="Rhea" id="RHEA:20049"/>
        <dbReference type="ChEBI" id="CHEBI:15377"/>
        <dbReference type="ChEBI" id="CHEBI:58435"/>
        <dbReference type="ChEBI" id="CHEBI:59457"/>
        <dbReference type="EC" id="3.5.4.19"/>
    </reaction>
</comment>
<comment type="cofactor">
    <cofactor evidence="1">
        <name>Mg(2+)</name>
        <dbReference type="ChEBI" id="CHEBI:18420"/>
    </cofactor>
    <text evidence="1">Binds 1 Mg(2+) ion per subunit.</text>
</comment>
<comment type="cofactor">
    <cofactor evidence="1">
        <name>Zn(2+)</name>
        <dbReference type="ChEBI" id="CHEBI:29105"/>
    </cofactor>
    <text evidence="1">Binds 1 zinc ion per subunit.</text>
</comment>
<comment type="pathway">
    <text evidence="1">Amino-acid biosynthesis; L-histidine biosynthesis; L-histidine from 5-phospho-alpha-D-ribose 1-diphosphate: step 3/9.</text>
</comment>
<comment type="subunit">
    <text evidence="1">Homodimer.</text>
</comment>
<comment type="subcellular location">
    <subcellularLocation>
        <location evidence="1">Cytoplasm</location>
    </subcellularLocation>
</comment>
<comment type="similarity">
    <text evidence="1">Belongs to the PRA-CH family.</text>
</comment>
<name>HIS3_DESPS</name>
<gene>
    <name evidence="1" type="primary">hisI</name>
    <name type="ordered locus">DP2639</name>
</gene>
<feature type="chain" id="PRO_0000229820" description="Phosphoribosyl-AMP cyclohydrolase">
    <location>
        <begin position="1"/>
        <end position="127"/>
    </location>
</feature>
<feature type="binding site" evidence="1">
    <location>
        <position position="75"/>
    </location>
    <ligand>
        <name>Mg(2+)</name>
        <dbReference type="ChEBI" id="CHEBI:18420"/>
    </ligand>
</feature>
<feature type="binding site" evidence="1">
    <location>
        <position position="76"/>
    </location>
    <ligand>
        <name>Zn(2+)</name>
        <dbReference type="ChEBI" id="CHEBI:29105"/>
        <note>ligand shared between dimeric partners</note>
    </ligand>
</feature>
<feature type="binding site" evidence="1">
    <location>
        <position position="77"/>
    </location>
    <ligand>
        <name>Mg(2+)</name>
        <dbReference type="ChEBI" id="CHEBI:18420"/>
    </ligand>
</feature>
<feature type="binding site" evidence="1">
    <location>
        <position position="79"/>
    </location>
    <ligand>
        <name>Mg(2+)</name>
        <dbReference type="ChEBI" id="CHEBI:18420"/>
    </ligand>
</feature>
<feature type="binding site" evidence="1">
    <location>
        <position position="93"/>
    </location>
    <ligand>
        <name>Zn(2+)</name>
        <dbReference type="ChEBI" id="CHEBI:29105"/>
        <note>ligand shared between dimeric partners</note>
    </ligand>
</feature>
<feature type="binding site" evidence="1">
    <location>
        <position position="100"/>
    </location>
    <ligand>
        <name>Zn(2+)</name>
        <dbReference type="ChEBI" id="CHEBI:29105"/>
        <note>ligand shared between dimeric partners</note>
    </ligand>
</feature>
<protein>
    <recommendedName>
        <fullName evidence="1">Phosphoribosyl-AMP cyclohydrolase</fullName>
        <shortName evidence="1">PRA-CH</shortName>
        <ecNumber evidence="1">3.5.4.19</ecNumber>
    </recommendedName>
</protein>
<sequence>MVELNFEKSVDGLLPAVVQDYVSGEVLMLAYINKLSWEKTLETGQAHYWSRSRNSLWLKGESSGNVQVIHDILVDCDSDTVVFKVDQIGDAACHTGHRSCFFRRVHQGELVVEGKPLFDPAQVYGSK</sequence>
<organism>
    <name type="scientific">Desulfotalea psychrophila (strain LSv54 / DSM 12343)</name>
    <dbReference type="NCBI Taxonomy" id="177439"/>
    <lineage>
        <taxon>Bacteria</taxon>
        <taxon>Pseudomonadati</taxon>
        <taxon>Thermodesulfobacteriota</taxon>
        <taxon>Desulfobulbia</taxon>
        <taxon>Desulfobulbales</taxon>
        <taxon>Desulfocapsaceae</taxon>
        <taxon>Desulfotalea</taxon>
    </lineage>
</organism>
<reference key="1">
    <citation type="journal article" date="2004" name="Environ. Microbiol.">
        <title>The genome of Desulfotalea psychrophila, a sulfate-reducing bacterium from permanently cold Arctic sediments.</title>
        <authorList>
            <person name="Rabus R."/>
            <person name="Ruepp A."/>
            <person name="Frickey T."/>
            <person name="Rattei T."/>
            <person name="Fartmann B."/>
            <person name="Stark M."/>
            <person name="Bauer M."/>
            <person name="Zibat A."/>
            <person name="Lombardot T."/>
            <person name="Becker I."/>
            <person name="Amann J."/>
            <person name="Gellner K."/>
            <person name="Teeling H."/>
            <person name="Leuschner W.D."/>
            <person name="Gloeckner F.-O."/>
            <person name="Lupas A.N."/>
            <person name="Amann R."/>
            <person name="Klenk H.-P."/>
        </authorList>
    </citation>
    <scope>NUCLEOTIDE SEQUENCE [LARGE SCALE GENOMIC DNA]</scope>
    <source>
        <strain>DSM 12343 / LSv54</strain>
    </source>
</reference>